<evidence type="ECO:0000250" key="1">
    <source>
        <dbReference type="UniProtKB" id="P80607"/>
    </source>
</evidence>
<evidence type="ECO:0000250" key="2">
    <source>
        <dbReference type="UniProtKB" id="Q8H8T0"/>
    </source>
</evidence>
<evidence type="ECO:0000250" key="3">
    <source>
        <dbReference type="UniProtKB" id="Q8RU27"/>
    </source>
</evidence>
<evidence type="ECO:0000255" key="4"/>
<evidence type="ECO:0000269" key="5">
    <source>
    </source>
</evidence>
<evidence type="ECO:0000303" key="6">
    <source>
    </source>
</evidence>
<evidence type="ECO:0000305" key="7"/>
<organism>
    <name type="scientific">Phoenix dactylifera</name>
    <name type="common">Date palm</name>
    <dbReference type="NCBI Taxonomy" id="42345"/>
    <lineage>
        <taxon>Eukaryota</taxon>
        <taxon>Viridiplantae</taxon>
        <taxon>Streptophyta</taxon>
        <taxon>Embryophyta</taxon>
        <taxon>Tracheophyta</taxon>
        <taxon>Spermatophyta</taxon>
        <taxon>Magnoliopsida</taxon>
        <taxon>Liliopsida</taxon>
        <taxon>Arecaceae</taxon>
        <taxon>Coryphoideae</taxon>
        <taxon>Phoeniceae</taxon>
        <taxon>Phoenix</taxon>
    </lineage>
</organism>
<dbReference type="EC" id="5.4.99.30" evidence="2"/>
<dbReference type="STRING" id="42345.P85413"/>
<dbReference type="Proteomes" id="UP000228380">
    <property type="component" value="Unplaced"/>
</dbReference>
<dbReference type="GO" id="GO:0005829">
    <property type="term" value="C:cytosol"/>
    <property type="evidence" value="ECO:0007669"/>
    <property type="project" value="TreeGrafter"/>
</dbReference>
<dbReference type="GO" id="GO:0005576">
    <property type="term" value="C:extracellular region"/>
    <property type="evidence" value="ECO:0007669"/>
    <property type="project" value="UniProtKB-KW"/>
</dbReference>
<dbReference type="GO" id="GO:0005794">
    <property type="term" value="C:Golgi apparatus"/>
    <property type="evidence" value="ECO:0007669"/>
    <property type="project" value="UniProtKB-SubCell"/>
</dbReference>
<dbReference type="GO" id="GO:0009506">
    <property type="term" value="C:plasmodesma"/>
    <property type="evidence" value="ECO:0007669"/>
    <property type="project" value="UniProtKB-SubCell"/>
</dbReference>
<dbReference type="GO" id="GO:0052691">
    <property type="term" value="F:UDP-arabinopyranose mutase activity"/>
    <property type="evidence" value="ECO:0007669"/>
    <property type="project" value="UniProtKB-EC"/>
</dbReference>
<dbReference type="GO" id="GO:0071555">
    <property type="term" value="P:cell wall organization"/>
    <property type="evidence" value="ECO:0007669"/>
    <property type="project" value="UniProtKB-KW"/>
</dbReference>
<dbReference type="GO" id="GO:0030244">
    <property type="term" value="P:cellulose biosynthetic process"/>
    <property type="evidence" value="ECO:0007669"/>
    <property type="project" value="UniProtKB-KW"/>
</dbReference>
<dbReference type="GO" id="GO:0033356">
    <property type="term" value="P:UDP-L-arabinose metabolic process"/>
    <property type="evidence" value="ECO:0007669"/>
    <property type="project" value="TreeGrafter"/>
</dbReference>
<dbReference type="InterPro" id="IPR037595">
    <property type="entry name" value="RGP_fam"/>
</dbReference>
<dbReference type="PANTHER" id="PTHR31682:SF44">
    <property type="entry name" value="UDP-ARABINOPYRANOSE MUTASE 3"/>
    <property type="match status" value="1"/>
</dbReference>
<dbReference type="PANTHER" id="PTHR31682">
    <property type="entry name" value="UDP-ARABINOSE MUTASE"/>
    <property type="match status" value="1"/>
</dbReference>
<dbReference type="Pfam" id="PF03214">
    <property type="entry name" value="RGP"/>
    <property type="match status" value="1"/>
</dbReference>
<proteinExistence type="evidence at protein level"/>
<accession>P85413</accession>
<protein>
    <recommendedName>
        <fullName evidence="7">Probable UDP-arabinopyranose mutase 1</fullName>
        <ecNumber evidence="2">5.4.99.30</ecNumber>
    </recommendedName>
    <alternativeName>
        <fullName evidence="7">Reversibly glycosylated polypeptide</fullName>
        <shortName evidence="7">RGP</shortName>
    </alternativeName>
    <alternativeName>
        <fullName evidence="7">UDP-L-arabinose mutase 1</fullName>
    </alternativeName>
    <alternativeName>
        <fullName evidence="7">UDP-glucose:protein transglucosylase</fullName>
        <shortName evidence="7">UPTG</shortName>
    </alternativeName>
</protein>
<keyword id="KW-0020">Allergen</keyword>
<keyword id="KW-0965">Cell junction</keyword>
<keyword id="KW-0134">Cell wall</keyword>
<keyword id="KW-0961">Cell wall biogenesis/degradation</keyword>
<keyword id="KW-0135">Cellulose biosynthesis</keyword>
<keyword id="KW-0903">Direct protein sequencing</keyword>
<keyword id="KW-0333">Golgi apparatus</keyword>
<keyword id="KW-0413">Isomerase</keyword>
<keyword id="KW-1185">Reference proteome</keyword>
<keyword id="KW-0964">Secreted</keyword>
<feature type="chain" id="PRO_0000372707" description="Probable UDP-arabinopyranose mutase 1">
    <location>
        <begin position="1" status="less than"/>
        <end position="60" status="greater than"/>
    </location>
</feature>
<feature type="non-consecutive residues" evidence="6">
    <location>
        <begin position="20"/>
        <end position="21"/>
    </location>
</feature>
<feature type="non-consecutive residues" evidence="6">
    <location>
        <begin position="30"/>
        <end position="31"/>
    </location>
</feature>
<feature type="non-terminal residue" evidence="6">
    <location>
        <position position="1"/>
    </location>
</feature>
<feature type="non-terminal residue" evidence="6">
    <location>
        <position position="60"/>
    </location>
</feature>
<name>RGP1_PHODC</name>
<sequence length="60" mass="6847">TIKVPEGFDYELYNRNDINRYVDAVLTIPKVICDHLGLGVKTGLPYIWHSKASNPFVNLK</sequence>
<reference key="1">
    <citation type="journal article" date="2009" name="J. Investig. Allergol. Clin. Immunol.">
        <title>Identification of 2 new allergens of Phoenix dactylifera using an immunoproteomics approach.</title>
        <authorList>
            <person name="Postigo I."/>
            <person name="Guisantes J.A."/>
            <person name="Negro J.M."/>
            <person name="Rodriguez-Pacheco R."/>
            <person name="David-Garcia D."/>
            <person name="Martinez J."/>
        </authorList>
    </citation>
    <scope>PROTEIN SEQUENCE</scope>
    <scope>MASS SPECTROMETRY</scope>
    <scope>ALLERGEN</scope>
    <source>
        <tissue evidence="5">Pollen</tissue>
    </source>
</reference>
<comment type="function">
    <text evidence="2">Probable UDP-L-arabinose mutase involved in the biosynthesis of cell wall non-cellulosic polysaccharides.</text>
</comment>
<comment type="catalytic activity">
    <reaction evidence="2">
        <text>UDP-beta-L-arabinofuranose = UDP-beta-L-arabinopyranose</text>
        <dbReference type="Rhea" id="RHEA:28350"/>
        <dbReference type="ChEBI" id="CHEBI:61457"/>
        <dbReference type="ChEBI" id="CHEBI:61463"/>
        <dbReference type="EC" id="5.4.99.30"/>
    </reaction>
</comment>
<comment type="cofactor">
    <cofactor evidence="2">
        <name>Mn(2+)</name>
        <dbReference type="ChEBI" id="CHEBI:29035"/>
    </cofactor>
    <cofactor evidence="2">
        <name>Mg(2+)</name>
        <dbReference type="ChEBI" id="CHEBI:18420"/>
    </cofactor>
</comment>
<comment type="subunit">
    <text evidence="3">Homopentamer or homohexamer.</text>
</comment>
<comment type="subcellular location">
    <subcellularLocation>
        <location evidence="1">Secreted</location>
        <location evidence="1">Cell wall</location>
    </subcellularLocation>
    <subcellularLocation>
        <location evidence="1">Cell junction</location>
        <location evidence="1">Plasmodesma</location>
    </subcellularLocation>
    <subcellularLocation>
        <location evidence="1">Golgi apparatus</location>
    </subcellularLocation>
    <text evidence="1">Cell wall-associated, with highest concentrations on plasmodesmata. Also located in the Golgi apparatus (By similarity).</text>
</comment>
<comment type="mass spectrometry" mass="40081.0" method="MALDI" evidence="5"/>
<comment type="allergen">
    <text evidence="5">Causes an allergic reaction in human. Binds to IgE.</text>
</comment>
<comment type="miscellaneous">
    <text evidence="5">On the 2D-gel the determined pI of this protein is: 6.24, its MW is: 20 kDa.</text>
</comment>
<comment type="similarity">
    <text evidence="4">Belongs to the RGP family.</text>
</comment>